<protein>
    <recommendedName>
        <fullName evidence="1">Small ribosomal subunit protein uS14</fullName>
    </recommendedName>
    <alternativeName>
        <fullName evidence="2">30S ribosomal protein S14</fullName>
    </alternativeName>
</protein>
<dbReference type="EMBL" id="BX548174">
    <property type="protein sequence ID" value="CAE19649.1"/>
    <property type="molecule type" value="Genomic_DNA"/>
</dbReference>
<dbReference type="RefSeq" id="WP_011132824.1">
    <property type="nucleotide sequence ID" value="NC_005072.1"/>
</dbReference>
<dbReference type="SMR" id="Q7TU67"/>
<dbReference type="STRING" id="59919.PMM1190"/>
<dbReference type="KEGG" id="pmm:PMM1190"/>
<dbReference type="eggNOG" id="COG0199">
    <property type="taxonomic scope" value="Bacteria"/>
</dbReference>
<dbReference type="HOGENOM" id="CLU_139869_0_1_3"/>
<dbReference type="OrthoDB" id="9810484at2"/>
<dbReference type="Proteomes" id="UP000001026">
    <property type="component" value="Chromosome"/>
</dbReference>
<dbReference type="GO" id="GO:0005737">
    <property type="term" value="C:cytoplasm"/>
    <property type="evidence" value="ECO:0007669"/>
    <property type="project" value="UniProtKB-ARBA"/>
</dbReference>
<dbReference type="GO" id="GO:0015935">
    <property type="term" value="C:small ribosomal subunit"/>
    <property type="evidence" value="ECO:0007669"/>
    <property type="project" value="TreeGrafter"/>
</dbReference>
<dbReference type="GO" id="GO:0019843">
    <property type="term" value="F:rRNA binding"/>
    <property type="evidence" value="ECO:0007669"/>
    <property type="project" value="UniProtKB-UniRule"/>
</dbReference>
<dbReference type="GO" id="GO:0003735">
    <property type="term" value="F:structural constituent of ribosome"/>
    <property type="evidence" value="ECO:0007669"/>
    <property type="project" value="InterPro"/>
</dbReference>
<dbReference type="GO" id="GO:0006412">
    <property type="term" value="P:translation"/>
    <property type="evidence" value="ECO:0007669"/>
    <property type="project" value="UniProtKB-UniRule"/>
</dbReference>
<dbReference type="FunFam" id="1.10.287.1480:FF:000001">
    <property type="entry name" value="30S ribosomal protein S14"/>
    <property type="match status" value="1"/>
</dbReference>
<dbReference type="Gene3D" id="1.10.287.1480">
    <property type="match status" value="1"/>
</dbReference>
<dbReference type="HAMAP" id="MF_00537">
    <property type="entry name" value="Ribosomal_uS14_1"/>
    <property type="match status" value="1"/>
</dbReference>
<dbReference type="InterPro" id="IPR001209">
    <property type="entry name" value="Ribosomal_uS14"/>
</dbReference>
<dbReference type="InterPro" id="IPR023036">
    <property type="entry name" value="Ribosomal_uS14_bac/plastid"/>
</dbReference>
<dbReference type="InterPro" id="IPR018271">
    <property type="entry name" value="Ribosomal_uS14_CS"/>
</dbReference>
<dbReference type="NCBIfam" id="NF006477">
    <property type="entry name" value="PRK08881.1"/>
    <property type="match status" value="1"/>
</dbReference>
<dbReference type="PANTHER" id="PTHR19836">
    <property type="entry name" value="30S RIBOSOMAL PROTEIN S14"/>
    <property type="match status" value="1"/>
</dbReference>
<dbReference type="PANTHER" id="PTHR19836:SF19">
    <property type="entry name" value="SMALL RIBOSOMAL SUBUNIT PROTEIN US14M"/>
    <property type="match status" value="1"/>
</dbReference>
<dbReference type="Pfam" id="PF00253">
    <property type="entry name" value="Ribosomal_S14"/>
    <property type="match status" value="1"/>
</dbReference>
<dbReference type="SUPFAM" id="SSF57716">
    <property type="entry name" value="Glucocorticoid receptor-like (DNA-binding domain)"/>
    <property type="match status" value="1"/>
</dbReference>
<dbReference type="PROSITE" id="PS00527">
    <property type="entry name" value="RIBOSOMAL_S14"/>
    <property type="match status" value="1"/>
</dbReference>
<gene>
    <name evidence="1" type="primary">rpsN</name>
    <name evidence="1" type="synonym">rps14</name>
    <name type="ordered locus">PMM1190</name>
</gene>
<keyword id="KW-0687">Ribonucleoprotein</keyword>
<keyword id="KW-0689">Ribosomal protein</keyword>
<keyword id="KW-0694">RNA-binding</keyword>
<keyword id="KW-0699">rRNA-binding</keyword>
<organism>
    <name type="scientific">Prochlorococcus marinus subsp. pastoris (strain CCMP1986 / NIES-2087 / MED4)</name>
    <dbReference type="NCBI Taxonomy" id="59919"/>
    <lineage>
        <taxon>Bacteria</taxon>
        <taxon>Bacillati</taxon>
        <taxon>Cyanobacteriota</taxon>
        <taxon>Cyanophyceae</taxon>
        <taxon>Synechococcales</taxon>
        <taxon>Prochlorococcaceae</taxon>
        <taxon>Prochlorococcus</taxon>
    </lineage>
</organism>
<feature type="chain" id="PRO_1000128505" description="Small ribosomal subunit protein uS14">
    <location>
        <begin position="1"/>
        <end position="100"/>
    </location>
</feature>
<reference key="1">
    <citation type="journal article" date="2003" name="Nature">
        <title>Genome divergence in two Prochlorococcus ecotypes reflects oceanic niche differentiation.</title>
        <authorList>
            <person name="Rocap G."/>
            <person name="Larimer F.W."/>
            <person name="Lamerdin J.E."/>
            <person name="Malfatti S."/>
            <person name="Chain P."/>
            <person name="Ahlgren N.A."/>
            <person name="Arellano A."/>
            <person name="Coleman M."/>
            <person name="Hauser L."/>
            <person name="Hess W.R."/>
            <person name="Johnson Z.I."/>
            <person name="Land M.L."/>
            <person name="Lindell D."/>
            <person name="Post A.F."/>
            <person name="Regala W."/>
            <person name="Shah M."/>
            <person name="Shaw S.L."/>
            <person name="Steglich C."/>
            <person name="Sullivan M.B."/>
            <person name="Ting C.S."/>
            <person name="Tolonen A."/>
            <person name="Webb E.A."/>
            <person name="Zinser E.R."/>
            <person name="Chisholm S.W."/>
        </authorList>
    </citation>
    <scope>NUCLEOTIDE SEQUENCE [LARGE SCALE GENOMIC DNA]</scope>
    <source>
        <strain>CCMP1986 / NIES-2087 / MED4</strain>
    </source>
</reference>
<name>RS14_PROMP</name>
<evidence type="ECO:0000255" key="1">
    <source>
        <dbReference type="HAMAP-Rule" id="MF_00537"/>
    </source>
</evidence>
<evidence type="ECO:0000305" key="2"/>
<proteinExistence type="inferred from homology"/>
<sequence>MAKKSMIAREVKRKKLVKKYATKRKSLLDEFNAAKDPMERLEIHRKIQGLPRNSAPTRVRNRCWATGKPRGVYRDFGLCRNQLRLRAHNGELPGVVKSSW</sequence>
<accession>Q7TU67</accession>
<comment type="function">
    <text evidence="1">Binds 16S rRNA, required for the assembly of 30S particles and may also be responsible for determining the conformation of the 16S rRNA at the A site.</text>
</comment>
<comment type="subunit">
    <text evidence="1">Part of the 30S ribosomal subunit. Contacts proteins S3 and S10.</text>
</comment>
<comment type="similarity">
    <text evidence="1">Belongs to the universal ribosomal protein uS14 family.</text>
</comment>